<gene>
    <name evidence="5" type="primary">IFTAP</name>
    <name type="synonym">C11orf74</name>
    <name evidence="1" type="synonym">NWC</name>
</gene>
<name>IFTAP_HUMAN</name>
<evidence type="ECO:0000250" key="1">
    <source>
        <dbReference type="UniProtKB" id="Q9CQI4"/>
    </source>
</evidence>
<evidence type="ECO:0000269" key="2">
    <source>
    </source>
</evidence>
<evidence type="ECO:0000303" key="3">
    <source>
    </source>
</evidence>
<evidence type="ECO:0000303" key="4">
    <source ref="1"/>
</evidence>
<evidence type="ECO:0000312" key="5">
    <source>
        <dbReference type="HGNC" id="HGNC:25142"/>
    </source>
</evidence>
<evidence type="ECO:0007744" key="6">
    <source>
    </source>
</evidence>
<accession>Q86VG3</accession>
<accession>D3DR18</accession>
<accession>Q96DD6</accession>
<dbReference type="EMBL" id="DQ121386">
    <property type="protein sequence ID" value="AAZ29248.1"/>
    <property type="molecule type" value="mRNA"/>
</dbReference>
<dbReference type="EMBL" id="CH471064">
    <property type="protein sequence ID" value="EAW68112.1"/>
    <property type="molecule type" value="Genomic_DNA"/>
</dbReference>
<dbReference type="EMBL" id="CH471064">
    <property type="protein sequence ID" value="EAW68113.1"/>
    <property type="molecule type" value="Genomic_DNA"/>
</dbReference>
<dbReference type="EMBL" id="CH471064">
    <property type="protein sequence ID" value="EAW68114.1"/>
    <property type="molecule type" value="Genomic_DNA"/>
</dbReference>
<dbReference type="EMBL" id="CH471064">
    <property type="protein sequence ID" value="EAW68115.1"/>
    <property type="molecule type" value="Genomic_DNA"/>
</dbReference>
<dbReference type="EMBL" id="BC009561">
    <property type="protein sequence ID" value="AAH09561.1"/>
    <property type="molecule type" value="mRNA"/>
</dbReference>
<dbReference type="EMBL" id="BC051031">
    <property type="protein sequence ID" value="AAH51031.1"/>
    <property type="molecule type" value="mRNA"/>
</dbReference>
<dbReference type="CCDS" id="CCDS60762.1">
    <molecule id="Q86VG3-2"/>
</dbReference>
<dbReference type="CCDS" id="CCDS7904.1">
    <molecule id="Q86VG3-1"/>
</dbReference>
<dbReference type="RefSeq" id="NP_001263651.1">
    <molecule id="Q86VG3-1"/>
    <property type="nucleotide sequence ID" value="NM_001276722.2"/>
</dbReference>
<dbReference type="RefSeq" id="NP_001263652.1">
    <molecule id="Q86VG3-1"/>
    <property type="nucleotide sequence ID" value="NM_001276723.2"/>
</dbReference>
<dbReference type="RefSeq" id="NP_001263653.1">
    <molecule id="Q86VG3-1"/>
    <property type="nucleotide sequence ID" value="NM_001276724.2"/>
</dbReference>
<dbReference type="RefSeq" id="NP_001263654.1">
    <molecule id="Q86VG3-2"/>
    <property type="nucleotide sequence ID" value="NM_001276725.2"/>
</dbReference>
<dbReference type="RefSeq" id="NP_001263655.1">
    <molecule id="Q86VG3-2"/>
    <property type="nucleotide sequence ID" value="NM_001276726.2"/>
</dbReference>
<dbReference type="RefSeq" id="NP_001263656.1">
    <molecule id="Q86VG3-2"/>
    <property type="nucleotide sequence ID" value="NM_001276727.2"/>
</dbReference>
<dbReference type="RefSeq" id="NP_620142.2">
    <molecule id="Q86VG3-1"/>
    <property type="nucleotide sequence ID" value="NM_138787.3"/>
</dbReference>
<dbReference type="RefSeq" id="XP_006718201.1">
    <molecule id="Q86VG3-1"/>
    <property type="nucleotide sequence ID" value="XM_006718138.5"/>
</dbReference>
<dbReference type="RefSeq" id="XP_011518187.1">
    <molecule id="Q86VG3-1"/>
    <property type="nucleotide sequence ID" value="XM_011519885.4"/>
</dbReference>
<dbReference type="RefSeq" id="XP_047282297.1">
    <molecule id="Q86VG3-1"/>
    <property type="nucleotide sequence ID" value="XM_047426341.1"/>
</dbReference>
<dbReference type="RefSeq" id="XP_047282298.1">
    <molecule id="Q86VG3-2"/>
    <property type="nucleotide sequence ID" value="XM_047426342.1"/>
</dbReference>
<dbReference type="RefSeq" id="XP_047282299.1">
    <molecule id="Q86VG3-2"/>
    <property type="nucleotide sequence ID" value="XM_047426343.1"/>
</dbReference>
<dbReference type="RefSeq" id="XP_054223592.1">
    <molecule id="Q86VG3-1"/>
    <property type="nucleotide sequence ID" value="XM_054367617.1"/>
</dbReference>
<dbReference type="RefSeq" id="XP_054223593.1">
    <molecule id="Q86VG3-1"/>
    <property type="nucleotide sequence ID" value="XM_054367618.1"/>
</dbReference>
<dbReference type="RefSeq" id="XP_054223594.1">
    <molecule id="Q86VG3-1"/>
    <property type="nucleotide sequence ID" value="XM_054367619.1"/>
</dbReference>
<dbReference type="RefSeq" id="XP_054223595.1">
    <molecule id="Q86VG3-2"/>
    <property type="nucleotide sequence ID" value="XM_054367620.1"/>
</dbReference>
<dbReference type="RefSeq" id="XP_054223596.1">
    <molecule id="Q86VG3-2"/>
    <property type="nucleotide sequence ID" value="XM_054367621.1"/>
</dbReference>
<dbReference type="BioGRID" id="125655">
    <property type="interactions" value="29"/>
</dbReference>
<dbReference type="FunCoup" id="Q86VG3">
    <property type="interactions" value="82"/>
</dbReference>
<dbReference type="IntAct" id="Q86VG3">
    <property type="interactions" value="29"/>
</dbReference>
<dbReference type="MINT" id="Q86VG3"/>
<dbReference type="STRING" id="9606.ENSP00000403937"/>
<dbReference type="GlyGen" id="Q86VG3">
    <property type="glycosylation" value="1 site, 1 O-linked glycan (1 site)"/>
</dbReference>
<dbReference type="iPTMnet" id="Q86VG3"/>
<dbReference type="PhosphoSitePlus" id="Q86VG3"/>
<dbReference type="BioMuta" id="C11orf74"/>
<dbReference type="DMDM" id="74727571"/>
<dbReference type="jPOST" id="Q86VG3"/>
<dbReference type="MassIVE" id="Q86VG3"/>
<dbReference type="PaxDb" id="9606-ENSP00000403937"/>
<dbReference type="PeptideAtlas" id="Q86VG3"/>
<dbReference type="ProteomicsDB" id="70009">
    <molecule id="Q86VG3-1"/>
</dbReference>
<dbReference type="ProteomicsDB" id="70010">
    <molecule id="Q86VG3-2"/>
</dbReference>
<dbReference type="Pumba" id="Q86VG3"/>
<dbReference type="Antibodypedia" id="26025">
    <property type="antibodies" value="116 antibodies from 19 providers"/>
</dbReference>
<dbReference type="DNASU" id="119710"/>
<dbReference type="Ensembl" id="ENST00000334307.10">
    <molecule id="Q86VG3-1"/>
    <property type="protein sequence ID" value="ENSP00000334848.5"/>
    <property type="gene ID" value="ENSG00000166352.18"/>
</dbReference>
<dbReference type="Ensembl" id="ENST00000347206.8">
    <molecule id="Q86VG3-2"/>
    <property type="protein sequence ID" value="ENSP00000299442.6"/>
    <property type="gene ID" value="ENSG00000166352.18"/>
</dbReference>
<dbReference type="Ensembl" id="ENST00000446510.6">
    <molecule id="Q86VG3-1"/>
    <property type="protein sequence ID" value="ENSP00000403937.3"/>
    <property type="gene ID" value="ENSG00000166352.18"/>
</dbReference>
<dbReference type="Ensembl" id="ENST00000527108.6">
    <molecule id="Q86VG3-2"/>
    <property type="protein sequence ID" value="ENSP00000435676.2"/>
    <property type="gene ID" value="ENSG00000166352.18"/>
</dbReference>
<dbReference type="Ensembl" id="ENST00000530697.6">
    <molecule id="Q86VG3-1"/>
    <property type="protein sequence ID" value="ENSP00000432685.2"/>
    <property type="gene ID" value="ENSG00000166352.18"/>
</dbReference>
<dbReference type="Ensembl" id="ENST00000531554.6">
    <molecule id="Q86VG3-1"/>
    <property type="protein sequence ID" value="ENSP00000433407.2"/>
    <property type="gene ID" value="ENSG00000166352.18"/>
</dbReference>
<dbReference type="Ensembl" id="ENST00000532470.3">
    <molecule id="Q86VG3-1"/>
    <property type="protein sequence ID" value="ENSP00000431374.2"/>
    <property type="gene ID" value="ENSG00000166352.18"/>
</dbReference>
<dbReference type="Ensembl" id="ENST00000534635.5">
    <molecule id="Q86VG3-2"/>
    <property type="protein sequence ID" value="ENSP00000433152.1"/>
    <property type="gene ID" value="ENSG00000166352.18"/>
</dbReference>
<dbReference type="Ensembl" id="ENST00000617650.5">
    <molecule id="Q86VG3-1"/>
    <property type="protein sequence ID" value="ENSP00000483671.1"/>
    <property type="gene ID" value="ENSG00000166352.18"/>
</dbReference>
<dbReference type="Ensembl" id="ENST00000676979.1">
    <molecule id="Q86VG3-1"/>
    <property type="protein sequence ID" value="ENSP00000503448.1"/>
    <property type="gene ID" value="ENSG00000166352.18"/>
</dbReference>
<dbReference type="Ensembl" id="ENST00000678060.1">
    <molecule id="Q86VG3-1"/>
    <property type="protein sequence ID" value="ENSP00000504720.1"/>
    <property type="gene ID" value="ENSG00000166352.18"/>
</dbReference>
<dbReference type="GeneID" id="119710"/>
<dbReference type="KEGG" id="hsa:119710"/>
<dbReference type="MANE-Select" id="ENST00000334307.10">
    <property type="protein sequence ID" value="ENSP00000334848.5"/>
    <property type="RefSeq nucleotide sequence ID" value="NM_138787.4"/>
    <property type="RefSeq protein sequence ID" value="NP_620142.2"/>
</dbReference>
<dbReference type="UCSC" id="uc001mwy.3">
    <molecule id="Q86VG3-1"/>
    <property type="organism name" value="human"/>
</dbReference>
<dbReference type="AGR" id="HGNC:25142"/>
<dbReference type="CTD" id="119710"/>
<dbReference type="DisGeNET" id="119710"/>
<dbReference type="GeneCards" id="IFTAP"/>
<dbReference type="HGNC" id="HGNC:25142">
    <property type="gene designation" value="IFTAP"/>
</dbReference>
<dbReference type="HPA" id="ENSG00000166352">
    <property type="expression patterns" value="Low tissue specificity"/>
</dbReference>
<dbReference type="MIM" id="619270">
    <property type="type" value="gene"/>
</dbReference>
<dbReference type="neXtProt" id="NX_Q86VG3"/>
<dbReference type="OpenTargets" id="ENSG00000166352"/>
<dbReference type="VEuPathDB" id="HostDB:ENSG00000166352"/>
<dbReference type="eggNOG" id="ENOG502S1X7">
    <property type="taxonomic scope" value="Eukaryota"/>
</dbReference>
<dbReference type="GeneTree" id="ENSGT00390000013149"/>
<dbReference type="HOGENOM" id="CLU_1815126_0_0_1"/>
<dbReference type="InParanoid" id="Q86VG3"/>
<dbReference type="OMA" id="KFINCHE"/>
<dbReference type="OrthoDB" id="10057631at2759"/>
<dbReference type="PAN-GO" id="Q86VG3">
    <property type="GO annotations" value="5 GO annotations based on evolutionary models"/>
</dbReference>
<dbReference type="PhylomeDB" id="Q86VG3"/>
<dbReference type="TreeFam" id="TF335968"/>
<dbReference type="PathwayCommons" id="Q86VG3"/>
<dbReference type="SignaLink" id="Q86VG3"/>
<dbReference type="SIGNOR" id="Q86VG3"/>
<dbReference type="BioGRID-ORCS" id="119710">
    <property type="hits" value="20 hits in 1087 CRISPR screens"/>
</dbReference>
<dbReference type="GenomeRNAi" id="119710"/>
<dbReference type="Pharos" id="Q86VG3">
    <property type="development level" value="Tbio"/>
</dbReference>
<dbReference type="PRO" id="PR:Q86VG3"/>
<dbReference type="Proteomes" id="UP000005640">
    <property type="component" value="Chromosome 11"/>
</dbReference>
<dbReference type="RNAct" id="Q86VG3">
    <property type="molecule type" value="protein"/>
</dbReference>
<dbReference type="Bgee" id="ENSG00000166352">
    <property type="expression patterns" value="Expressed in left ventricle myocardium and 178 other cell types or tissues"/>
</dbReference>
<dbReference type="ExpressionAtlas" id="Q86VG3">
    <property type="expression patterns" value="baseline and differential"/>
</dbReference>
<dbReference type="GO" id="GO:0097731">
    <property type="term" value="C:9+0 non-motile cilium"/>
    <property type="evidence" value="ECO:0000318"/>
    <property type="project" value="GO_Central"/>
</dbReference>
<dbReference type="GO" id="GO:0005829">
    <property type="term" value="C:cytosol"/>
    <property type="evidence" value="ECO:0000318"/>
    <property type="project" value="GO_Central"/>
</dbReference>
<dbReference type="GO" id="GO:0120160">
    <property type="term" value="F:intraciliary transport particle A binding"/>
    <property type="evidence" value="ECO:0000314"/>
    <property type="project" value="UniProtKB"/>
</dbReference>
<dbReference type="GO" id="GO:0007340">
    <property type="term" value="P:acrosome reaction"/>
    <property type="evidence" value="ECO:0000318"/>
    <property type="project" value="GO_Central"/>
</dbReference>
<dbReference type="GO" id="GO:0007283">
    <property type="term" value="P:spermatogenesis"/>
    <property type="evidence" value="ECO:0000318"/>
    <property type="project" value="GO_Central"/>
</dbReference>
<dbReference type="InterPro" id="IPR040028">
    <property type="entry name" value="IFTAP"/>
</dbReference>
<dbReference type="PANTHER" id="PTHR35543:SF1">
    <property type="entry name" value="INTRAFLAGELLAR TRANSPORT-ASSOCIATED PROTEIN"/>
    <property type="match status" value="1"/>
</dbReference>
<dbReference type="PANTHER" id="PTHR35543">
    <property type="entry name" value="PROTEIN C11ORF74"/>
    <property type="match status" value="1"/>
</dbReference>
<dbReference type="Pfam" id="PF17722">
    <property type="entry name" value="IFTAP"/>
    <property type="match status" value="2"/>
</dbReference>
<protein>
    <recommendedName>
        <fullName>Intraflagellar transport-associated protein</fullName>
    </recommendedName>
    <alternativeName>
        <fullName>Protein HEPIS</fullName>
    </alternativeName>
</protein>
<sequence>MSAHMSGLEIMDEDQLIKDVLDKFLNCHEQTYDEEFLNTFTHLSQEDHVSKRGVFGTDSSENIFTSAKVTHKNEADDYHLRNKTIFLRTSSQCLEEQVDNFLDLEDLDMDEEIKPQMSEDLLLLPGEVEQDVSTSIPSCIPFVAQPPTCEVKPKPSVKRMDKQTEEILGDEVQLFSLDEEFDYDNVMLTSKFSPAEIENIKELCKQQKRKDTSPDLEKSCD</sequence>
<keyword id="KW-0025">Alternative splicing</keyword>
<keyword id="KW-0597">Phosphoprotein</keyword>
<keyword id="KW-1267">Proteomics identification</keyword>
<keyword id="KW-1185">Reference proteome</keyword>
<proteinExistence type="evidence at protein level"/>
<reference key="1">
    <citation type="submission" date="2005-07" db="EMBL/GenBank/DDBJ databases">
        <title>The interaction of the SARS coronavirus non-structural protein 10 with the human embryo lung cellular protein HEPIS.</title>
        <authorList>
            <person name="Li Q."/>
            <person name="Ma S."/>
            <person name="Liu L."/>
            <person name="Wang L."/>
            <person name="Zhao H."/>
            <person name="Dong C."/>
            <person name="Liao Y."/>
        </authorList>
    </citation>
    <scope>NUCLEOTIDE SEQUENCE [MRNA] (ISOFORM 2)</scope>
</reference>
<reference key="2">
    <citation type="submission" date="2005-09" db="EMBL/GenBank/DDBJ databases">
        <authorList>
            <person name="Mural R.J."/>
            <person name="Istrail S."/>
            <person name="Sutton G.G."/>
            <person name="Florea L."/>
            <person name="Halpern A.L."/>
            <person name="Mobarry C.M."/>
            <person name="Lippert R."/>
            <person name="Walenz B."/>
            <person name="Shatkay H."/>
            <person name="Dew I."/>
            <person name="Miller J.R."/>
            <person name="Flanigan M.J."/>
            <person name="Edwards N.J."/>
            <person name="Bolanos R."/>
            <person name="Fasulo D."/>
            <person name="Halldorsson B.V."/>
            <person name="Hannenhalli S."/>
            <person name="Turner R."/>
            <person name="Yooseph S."/>
            <person name="Lu F."/>
            <person name="Nusskern D.R."/>
            <person name="Shue B.C."/>
            <person name="Zheng X.H."/>
            <person name="Zhong F."/>
            <person name="Delcher A.L."/>
            <person name="Huson D.H."/>
            <person name="Kravitz S.A."/>
            <person name="Mouchard L."/>
            <person name="Reinert K."/>
            <person name="Remington K.A."/>
            <person name="Clark A.G."/>
            <person name="Waterman M.S."/>
            <person name="Eichler E.E."/>
            <person name="Adams M.D."/>
            <person name="Hunkapiller M.W."/>
            <person name="Myers E.W."/>
            <person name="Venter J.C."/>
        </authorList>
    </citation>
    <scope>NUCLEOTIDE SEQUENCE [LARGE SCALE GENOMIC DNA]</scope>
</reference>
<reference key="3">
    <citation type="journal article" date="2004" name="Genome Res.">
        <title>The status, quality, and expansion of the NIH full-length cDNA project: the Mammalian Gene Collection (MGC).</title>
        <authorList>
            <consortium name="The MGC Project Team"/>
        </authorList>
    </citation>
    <scope>NUCLEOTIDE SEQUENCE [LARGE SCALE MRNA] (ISOFORMS 1 AND 2)</scope>
    <source>
        <tissue>Cervix</tissue>
        <tissue>Pancreas</tissue>
    </source>
</reference>
<reference key="4">
    <citation type="journal article" date="2013" name="J. Proteome Res.">
        <title>Toward a comprehensive characterization of a human cancer cell phosphoproteome.</title>
        <authorList>
            <person name="Zhou H."/>
            <person name="Di Palma S."/>
            <person name="Preisinger C."/>
            <person name="Peng M."/>
            <person name="Polat A.N."/>
            <person name="Heck A.J."/>
            <person name="Mohammed S."/>
        </authorList>
    </citation>
    <scope>PHOSPHORYLATION [LARGE SCALE ANALYSIS] AT SER-59</scope>
    <scope>IDENTIFICATION BY MASS SPECTROMETRY [LARGE SCALE ANALYSIS]</scope>
    <source>
        <tissue>Erythroleukemia</tissue>
    </source>
</reference>
<reference key="5">
    <citation type="journal article" date="2019" name="J. Biochem.">
        <title>C11ORF74 interacts with the IFT-A complex and participates in ciliary BBSome localization.</title>
        <authorList>
            <person name="Takahara M."/>
            <person name="Kunii M."/>
            <person name="Nakamura K."/>
            <person name="Harada A."/>
            <person name="Hirano T."/>
            <person name="Katoh Y."/>
            <person name="Nakayama K."/>
        </authorList>
    </citation>
    <scope>FUNCTION</scope>
    <scope>INTERACTION WITH IFT122</scope>
</reference>
<comment type="function">
    <text evidence="2">Seems to play a role in ciliary BBSome localization, maybe through interaction with IFT-A complex.</text>
</comment>
<comment type="subunit">
    <text evidence="2">Interacts with IFT122; the interaction associates IFTAP with IFT-A complex.</text>
</comment>
<comment type="interaction">
    <interactant intactId="EBI-3923037">
        <id>Q86VG3</id>
    </interactant>
    <interactant intactId="EBI-1054687">
        <id>P20290</id>
        <label>BTF3</label>
    </interactant>
    <organismsDiffer>false</organismsDiffer>
    <experiments>4</experiments>
</comment>
<comment type="alternative products">
    <event type="alternative splicing"/>
    <isoform>
        <id>Q86VG3-1</id>
        <name>1</name>
        <sequence type="displayed"/>
    </isoform>
    <isoform>
        <id>Q86VG3-2</id>
        <name>2</name>
        <sequence type="described" ref="VSP_025793"/>
    </isoform>
</comment>
<feature type="chain" id="PRO_0000288854" description="Intraflagellar transport-associated protein">
    <location>
        <begin position="1"/>
        <end position="221"/>
    </location>
</feature>
<feature type="modified residue" description="Phosphoserine" evidence="6">
    <location>
        <position position="59"/>
    </location>
</feature>
<feature type="splice variant" id="VSP_025793" description="In isoform 2." evidence="3 4">
    <location>
        <begin position="46"/>
        <end position="119"/>
    </location>
</feature>
<organism>
    <name type="scientific">Homo sapiens</name>
    <name type="common">Human</name>
    <dbReference type="NCBI Taxonomy" id="9606"/>
    <lineage>
        <taxon>Eukaryota</taxon>
        <taxon>Metazoa</taxon>
        <taxon>Chordata</taxon>
        <taxon>Craniata</taxon>
        <taxon>Vertebrata</taxon>
        <taxon>Euteleostomi</taxon>
        <taxon>Mammalia</taxon>
        <taxon>Eutheria</taxon>
        <taxon>Euarchontoglires</taxon>
        <taxon>Primates</taxon>
        <taxon>Haplorrhini</taxon>
        <taxon>Catarrhini</taxon>
        <taxon>Hominidae</taxon>
        <taxon>Homo</taxon>
    </lineage>
</organism>